<dbReference type="EC" id="2.7.1.148" evidence="1"/>
<dbReference type="EMBL" id="CP000304">
    <property type="protein sequence ID" value="ABP80824.1"/>
    <property type="molecule type" value="Genomic_DNA"/>
</dbReference>
<dbReference type="RefSeq" id="WP_011914268.1">
    <property type="nucleotide sequence ID" value="NC_009434.1"/>
</dbReference>
<dbReference type="SMR" id="A4VPC3"/>
<dbReference type="KEGG" id="psa:PST_3186"/>
<dbReference type="eggNOG" id="COG1947">
    <property type="taxonomic scope" value="Bacteria"/>
</dbReference>
<dbReference type="HOGENOM" id="CLU_053057_3_0_6"/>
<dbReference type="UniPathway" id="UPA00056">
    <property type="reaction ID" value="UER00094"/>
</dbReference>
<dbReference type="Proteomes" id="UP000000233">
    <property type="component" value="Chromosome"/>
</dbReference>
<dbReference type="GO" id="GO:0050515">
    <property type="term" value="F:4-(cytidine 5'-diphospho)-2-C-methyl-D-erythritol kinase activity"/>
    <property type="evidence" value="ECO:0007669"/>
    <property type="project" value="UniProtKB-UniRule"/>
</dbReference>
<dbReference type="GO" id="GO:0005524">
    <property type="term" value="F:ATP binding"/>
    <property type="evidence" value="ECO:0007669"/>
    <property type="project" value="UniProtKB-UniRule"/>
</dbReference>
<dbReference type="GO" id="GO:0019288">
    <property type="term" value="P:isopentenyl diphosphate biosynthetic process, methylerythritol 4-phosphate pathway"/>
    <property type="evidence" value="ECO:0007669"/>
    <property type="project" value="UniProtKB-UniRule"/>
</dbReference>
<dbReference type="GO" id="GO:0016114">
    <property type="term" value="P:terpenoid biosynthetic process"/>
    <property type="evidence" value="ECO:0007669"/>
    <property type="project" value="InterPro"/>
</dbReference>
<dbReference type="FunFam" id="3.30.230.10:FF:000022">
    <property type="entry name" value="4-diphosphocytidyl-2-C-methyl-D-erythritol kinase"/>
    <property type="match status" value="1"/>
</dbReference>
<dbReference type="Gene3D" id="3.30.230.10">
    <property type="match status" value="1"/>
</dbReference>
<dbReference type="Gene3D" id="3.30.70.890">
    <property type="entry name" value="GHMP kinase, C-terminal domain"/>
    <property type="match status" value="1"/>
</dbReference>
<dbReference type="HAMAP" id="MF_00061">
    <property type="entry name" value="IspE"/>
    <property type="match status" value="1"/>
</dbReference>
<dbReference type="InterPro" id="IPR013750">
    <property type="entry name" value="GHMP_kinase_C_dom"/>
</dbReference>
<dbReference type="InterPro" id="IPR036554">
    <property type="entry name" value="GHMP_kinase_C_sf"/>
</dbReference>
<dbReference type="InterPro" id="IPR006204">
    <property type="entry name" value="GHMP_kinase_N_dom"/>
</dbReference>
<dbReference type="InterPro" id="IPR004424">
    <property type="entry name" value="IspE"/>
</dbReference>
<dbReference type="InterPro" id="IPR020568">
    <property type="entry name" value="Ribosomal_Su5_D2-typ_SF"/>
</dbReference>
<dbReference type="InterPro" id="IPR014721">
    <property type="entry name" value="Ribsml_uS5_D2-typ_fold_subgr"/>
</dbReference>
<dbReference type="NCBIfam" id="TIGR00154">
    <property type="entry name" value="ispE"/>
    <property type="match status" value="1"/>
</dbReference>
<dbReference type="NCBIfam" id="NF011202">
    <property type="entry name" value="PRK14608.1"/>
    <property type="match status" value="1"/>
</dbReference>
<dbReference type="PANTHER" id="PTHR43527">
    <property type="entry name" value="4-DIPHOSPHOCYTIDYL-2-C-METHYL-D-ERYTHRITOL KINASE, CHLOROPLASTIC"/>
    <property type="match status" value="1"/>
</dbReference>
<dbReference type="PANTHER" id="PTHR43527:SF2">
    <property type="entry name" value="4-DIPHOSPHOCYTIDYL-2-C-METHYL-D-ERYTHRITOL KINASE, CHLOROPLASTIC"/>
    <property type="match status" value="1"/>
</dbReference>
<dbReference type="Pfam" id="PF08544">
    <property type="entry name" value="GHMP_kinases_C"/>
    <property type="match status" value="1"/>
</dbReference>
<dbReference type="Pfam" id="PF00288">
    <property type="entry name" value="GHMP_kinases_N"/>
    <property type="match status" value="1"/>
</dbReference>
<dbReference type="PIRSF" id="PIRSF010376">
    <property type="entry name" value="IspE"/>
    <property type="match status" value="1"/>
</dbReference>
<dbReference type="SUPFAM" id="SSF55060">
    <property type="entry name" value="GHMP Kinase, C-terminal domain"/>
    <property type="match status" value="1"/>
</dbReference>
<dbReference type="SUPFAM" id="SSF54211">
    <property type="entry name" value="Ribosomal protein S5 domain 2-like"/>
    <property type="match status" value="1"/>
</dbReference>
<protein>
    <recommendedName>
        <fullName evidence="1">4-diphosphocytidyl-2-C-methyl-D-erythritol kinase</fullName>
        <shortName evidence="1">CMK</shortName>
        <ecNumber evidence="1">2.7.1.148</ecNumber>
    </recommendedName>
    <alternativeName>
        <fullName evidence="1">4-(cytidine-5'-diphospho)-2-C-methyl-D-erythritol kinase</fullName>
    </alternativeName>
</protein>
<feature type="chain" id="PRO_1000007878" description="4-diphosphocytidyl-2-C-methyl-D-erythritol kinase">
    <location>
        <begin position="1"/>
        <end position="284"/>
    </location>
</feature>
<feature type="active site" evidence="1">
    <location>
        <position position="9"/>
    </location>
</feature>
<feature type="active site" evidence="1">
    <location>
        <position position="134"/>
    </location>
</feature>
<feature type="binding site" evidence="1">
    <location>
        <begin position="92"/>
        <end position="102"/>
    </location>
    <ligand>
        <name>ATP</name>
        <dbReference type="ChEBI" id="CHEBI:30616"/>
    </ligand>
</feature>
<gene>
    <name evidence="1" type="primary">ispE</name>
    <name type="ordered locus">PST_3186</name>
</gene>
<name>ISPE_STUS1</name>
<reference key="1">
    <citation type="journal article" date="2008" name="Proc. Natl. Acad. Sci. U.S.A.">
        <title>Nitrogen fixation island and rhizosphere competence traits in the genome of root-associated Pseudomonas stutzeri A1501.</title>
        <authorList>
            <person name="Yan Y."/>
            <person name="Yang J."/>
            <person name="Dou Y."/>
            <person name="Chen M."/>
            <person name="Ping S."/>
            <person name="Peng J."/>
            <person name="Lu W."/>
            <person name="Zhang W."/>
            <person name="Yao Z."/>
            <person name="Li H."/>
            <person name="Liu W."/>
            <person name="He S."/>
            <person name="Geng L."/>
            <person name="Zhang X."/>
            <person name="Yang F."/>
            <person name="Yu H."/>
            <person name="Zhan Y."/>
            <person name="Li D."/>
            <person name="Lin Z."/>
            <person name="Wang Y."/>
            <person name="Elmerich C."/>
            <person name="Lin M."/>
            <person name="Jin Q."/>
        </authorList>
    </citation>
    <scope>NUCLEOTIDE SEQUENCE [LARGE SCALE GENOMIC DNA]</scope>
    <source>
        <strain>A1501</strain>
    </source>
</reference>
<sequence length="284" mass="30802">MLTLPAPAKLNLMLHIVGRRADGYHELQTLFQFLDHGDELSFSPREDGEIRLHTELPGVDHDSNLIVRAARLLQHESGCPQGADIHLLKRLPMGGGIGGGSSDAATALLGLNHLWQLHLEEDQLAELGLTLGADVPVFVRGRAAFAEGVGERLQPVELPEPWFLVIAPQVSVSTAEIFADPELTRNTPAITVRSLLAGGGHNDCQPIVEKRYPEVRNALSLLNKFVPASMTGTGACVFGSFPNEGEADKVRRQLPDTLPSFVARGRNVSMLHRCLEKLAQEVSA</sequence>
<comment type="function">
    <text evidence="1">Catalyzes the phosphorylation of the position 2 hydroxy group of 4-diphosphocytidyl-2C-methyl-D-erythritol.</text>
</comment>
<comment type="catalytic activity">
    <reaction evidence="1">
        <text>4-CDP-2-C-methyl-D-erythritol + ATP = 4-CDP-2-C-methyl-D-erythritol 2-phosphate + ADP + H(+)</text>
        <dbReference type="Rhea" id="RHEA:18437"/>
        <dbReference type="ChEBI" id="CHEBI:15378"/>
        <dbReference type="ChEBI" id="CHEBI:30616"/>
        <dbReference type="ChEBI" id="CHEBI:57823"/>
        <dbReference type="ChEBI" id="CHEBI:57919"/>
        <dbReference type="ChEBI" id="CHEBI:456216"/>
        <dbReference type="EC" id="2.7.1.148"/>
    </reaction>
</comment>
<comment type="pathway">
    <text evidence="1">Isoprenoid biosynthesis; isopentenyl diphosphate biosynthesis via DXP pathway; isopentenyl diphosphate from 1-deoxy-D-xylulose 5-phosphate: step 3/6.</text>
</comment>
<comment type="similarity">
    <text evidence="1">Belongs to the GHMP kinase family. IspE subfamily.</text>
</comment>
<keyword id="KW-0067">ATP-binding</keyword>
<keyword id="KW-0414">Isoprene biosynthesis</keyword>
<keyword id="KW-0418">Kinase</keyword>
<keyword id="KW-0547">Nucleotide-binding</keyword>
<keyword id="KW-1185">Reference proteome</keyword>
<keyword id="KW-0808">Transferase</keyword>
<evidence type="ECO:0000255" key="1">
    <source>
        <dbReference type="HAMAP-Rule" id="MF_00061"/>
    </source>
</evidence>
<accession>A4VPC3</accession>
<organism>
    <name type="scientific">Stutzerimonas stutzeri (strain A1501)</name>
    <name type="common">Pseudomonas stutzeri</name>
    <dbReference type="NCBI Taxonomy" id="379731"/>
    <lineage>
        <taxon>Bacteria</taxon>
        <taxon>Pseudomonadati</taxon>
        <taxon>Pseudomonadota</taxon>
        <taxon>Gammaproteobacteria</taxon>
        <taxon>Pseudomonadales</taxon>
        <taxon>Pseudomonadaceae</taxon>
        <taxon>Stutzerimonas</taxon>
    </lineage>
</organism>
<proteinExistence type="inferred from homology"/>